<protein>
    <recommendedName>
        <fullName>mRNA-capping enzyme small subunit</fullName>
    </recommendedName>
    <alternativeName>
        <fullName>mRNA (guanine-N(7))-methyltransferase</fullName>
        <ecNumber>2.1.1.56</ecNumber>
    </alternativeName>
    <alternativeName>
        <fullName>mRNA cap methyltransferase</fullName>
    </alternativeName>
</protein>
<evidence type="ECO:0000305" key="1"/>
<accession>O72908</accession>
<sequence length="289" mass="33867">MNTDRITAFIKNGISARMPFYDTLPDMDLVFGKNHLPSLEYGANYFLQLSKINDINRLSTEMLSLYTHDLNKESDISKLFEPYNIKTIKSYGRSIQADAVVVDLRPSNSLYKNEHPYYKSNNYLKENNLYICDYTMITFEIYRPIFELSTEKTCIIKVPTLFGKTIVNAVRVYCSLFRYVKLYKLSADSWLKDSAIIVCQQPHAANINKFITYIRKVTKSQTWLDSNNVNFILIHDSVERVFIEKFLSFSYKIYESLYYVHSLLYSSMTSDLQSLDNEYQKKLIKLLRG</sequence>
<comment type="function">
    <text>Catalyzes the last reaction in the mRNA cap formation pathway.</text>
</comment>
<comment type="catalytic activity">
    <reaction>
        <text>a 5'-end (5'-triphosphoguanosine)-ribonucleoside in mRNA + S-adenosyl-L-methionine = a 5'-end (N(7)-methyl 5'-triphosphoguanosine)-ribonucleoside in mRNA + S-adenosyl-L-homocysteine</text>
        <dbReference type="Rhea" id="RHEA:67008"/>
        <dbReference type="Rhea" id="RHEA-COMP:17166"/>
        <dbReference type="Rhea" id="RHEA-COMP:17167"/>
        <dbReference type="ChEBI" id="CHEBI:57856"/>
        <dbReference type="ChEBI" id="CHEBI:59789"/>
        <dbReference type="ChEBI" id="CHEBI:156461"/>
        <dbReference type="ChEBI" id="CHEBI:167617"/>
        <dbReference type="EC" id="2.1.1.56"/>
    </reaction>
</comment>
<comment type="subunit">
    <text>Heterodimer of a large and a small subunit.</text>
</comment>
<comment type="subcellular location">
    <subcellularLocation>
        <location evidence="1">Virion</location>
    </subcellularLocation>
    <text>All the enzymes and other proteins required to synthesize early mRNAs are packaged within the virion core along with the DNA genome.</text>
</comment>
<dbReference type="EC" id="2.1.1.56"/>
<dbReference type="EMBL" id="AJ005163">
    <property type="protein sequence ID" value="CAA06402.1"/>
    <property type="molecule type" value="Genomic_DNA"/>
</dbReference>
<dbReference type="EMBL" id="AF198100">
    <property type="protein sequence ID" value="AAF44395.1"/>
    <property type="molecule type" value="Genomic_DNA"/>
</dbReference>
<dbReference type="PIR" id="S42252">
    <property type="entry name" value="S42252"/>
</dbReference>
<dbReference type="RefSeq" id="NP_039014.1">
    <property type="nucleotide sequence ID" value="NC_002188.1"/>
</dbReference>
<dbReference type="SMR" id="O72908"/>
<dbReference type="GeneID" id="1486599"/>
<dbReference type="KEGG" id="vg:1486599"/>
<dbReference type="Proteomes" id="UP000008597">
    <property type="component" value="Segment"/>
</dbReference>
<dbReference type="GO" id="GO:0044423">
    <property type="term" value="C:virion component"/>
    <property type="evidence" value="ECO:0007669"/>
    <property type="project" value="UniProtKB-KW"/>
</dbReference>
<dbReference type="GO" id="GO:0004482">
    <property type="term" value="F:mRNA 5'-cap (guanine-N7-)-methyltransferase activity"/>
    <property type="evidence" value="ECO:0007669"/>
    <property type="project" value="UniProtKB-EC"/>
</dbReference>
<dbReference type="Gene3D" id="3.40.50.11680">
    <property type="entry name" value="Poxvirus mRNA capping enzyme, small subunit"/>
    <property type="match status" value="1"/>
</dbReference>
<dbReference type="InterPro" id="IPR005009">
    <property type="entry name" value="Poxvirus_mRNA-cap_ssu"/>
</dbReference>
<dbReference type="InterPro" id="IPR043096">
    <property type="entry name" value="Poxvirus_mRNA-cap_ssu_sf"/>
</dbReference>
<dbReference type="Pfam" id="PF03341">
    <property type="entry name" value="Pox_mRNA-cap"/>
    <property type="match status" value="1"/>
</dbReference>
<organism>
    <name type="scientific">Fowlpox virus (strain NVSL)</name>
    <name type="common">FPV</name>
    <dbReference type="NCBI Taxonomy" id="928301"/>
    <lineage>
        <taxon>Viruses</taxon>
        <taxon>Varidnaviria</taxon>
        <taxon>Bamfordvirae</taxon>
        <taxon>Nucleocytoviricota</taxon>
        <taxon>Pokkesviricetes</taxon>
        <taxon>Chitovirales</taxon>
        <taxon>Poxviridae</taxon>
        <taxon>Chordopoxvirinae</taxon>
        <taxon>Avipoxvirus</taxon>
        <taxon>Fowlpox virus</taxon>
    </lineage>
</organism>
<feature type="chain" id="PRO_0000210139" description="mRNA-capping enzyme small subunit">
    <location>
        <begin position="1"/>
        <end position="289"/>
    </location>
</feature>
<name>MCES_FOWPN</name>
<gene>
    <name type="ordered locus">FPV051</name>
    <name type="ORF">FP-D12</name>
    <name type="ORF">FPD12</name>
</gene>
<reference key="1">
    <citation type="submission" date="1998-05" db="EMBL/GenBank/DDBJ databases">
        <authorList>
            <person name="Skinner M.A."/>
        </authorList>
    </citation>
    <scope>NUCLEOTIDE SEQUENCE [GENOMIC DNA]</scope>
    <source>
        <strain>FP-9 / Isolate HP-440</strain>
    </source>
</reference>
<reference key="2">
    <citation type="journal article" date="1990" name="J. Gen. Virol.">
        <title>Analysis of the fowlpox virus genome region corresponding to the vaccinia virus D6 to A1 region: location of, and variation in, non-essential genes in poxviruses.</title>
        <authorList>
            <person name="Binns M.M."/>
            <person name="Britton B.S."/>
            <person name="Mason C."/>
            <person name="Boursnell M.E.G."/>
        </authorList>
    </citation>
    <scope>NUCLEOTIDE SEQUENCE [GENOMIC DNA]</scope>
</reference>
<reference key="3">
    <citation type="journal article" date="2000" name="J. Virol.">
        <title>The genome of fowlpox virus.</title>
        <authorList>
            <person name="Afonso C.L."/>
            <person name="Tulman E.R."/>
            <person name="Lu Z."/>
            <person name="Zsak L."/>
            <person name="Kutish G.F."/>
            <person name="Rock D.L."/>
        </authorList>
    </citation>
    <scope>NUCLEOTIDE SEQUENCE [LARGE SCALE GENOMIC DNA]</scope>
</reference>
<organismHost>
    <name type="scientific">Vertebrata</name>
    <dbReference type="NCBI Taxonomy" id="7742"/>
</organismHost>
<keyword id="KW-0489">Methyltransferase</keyword>
<keyword id="KW-0506">mRNA capping</keyword>
<keyword id="KW-0507">mRNA processing</keyword>
<keyword id="KW-1185">Reference proteome</keyword>
<keyword id="KW-0949">S-adenosyl-L-methionine</keyword>
<keyword id="KW-0808">Transferase</keyword>
<keyword id="KW-0946">Virion</keyword>
<proteinExistence type="predicted"/>